<proteinExistence type="evidence at protein level"/>
<evidence type="ECO:0000250" key="1">
    <source>
        <dbReference type="UniProtKB" id="P10295"/>
    </source>
</evidence>
<evidence type="ECO:0000269" key="2">
    <source>
    </source>
</evidence>
<evidence type="ECO:0000269" key="3">
    <source>
    </source>
</evidence>
<evidence type="ECO:0000269" key="4">
    <source>
    </source>
</evidence>
<evidence type="ECO:0000269" key="5">
    <source>
    </source>
</evidence>
<evidence type="ECO:0000269" key="6">
    <source>
    </source>
</evidence>
<evidence type="ECO:0000269" key="7">
    <source>
    </source>
</evidence>
<evidence type="ECO:0000303" key="8">
    <source>
    </source>
</evidence>
<evidence type="ECO:0000305" key="9"/>
<evidence type="ECO:0000305" key="10">
    <source>
    </source>
</evidence>
<evidence type="ECO:0007744" key="11">
    <source>
        <dbReference type="PDB" id="1HA9"/>
    </source>
</evidence>
<evidence type="ECO:0007744" key="12">
    <source>
        <dbReference type="PDB" id="1IB9"/>
    </source>
</evidence>
<evidence type="ECO:0007744" key="13">
    <source>
        <dbReference type="PDB" id="2C4B"/>
    </source>
</evidence>
<evidence type="ECO:0007744" key="14">
    <source>
        <dbReference type="PDB" id="2MT8"/>
    </source>
</evidence>
<evidence type="ECO:0007744" key="15">
    <source>
        <dbReference type="PDB" id="4GUX"/>
    </source>
</evidence>
<evidence type="ECO:0007829" key="16">
    <source>
        <dbReference type="PDB" id="2C4B"/>
    </source>
</evidence>
<evidence type="ECO:0007829" key="17">
    <source>
        <dbReference type="PDB" id="2MT8"/>
    </source>
</evidence>
<evidence type="ECO:0007829" key="18">
    <source>
        <dbReference type="PDB" id="2PO8"/>
    </source>
</evidence>
<evidence type="ECO:0007829" key="19">
    <source>
        <dbReference type="PDB" id="4GUX"/>
    </source>
</evidence>
<protein>
    <recommendedName>
        <fullName evidence="9">Trypsin inhibitor 2</fullName>
    </recommendedName>
    <alternativeName>
        <fullName evidence="8">MCoTI-II</fullName>
    </alternativeName>
    <alternativeName>
        <fullName evidence="8">Trypsin inhibitor II</fullName>
    </alternativeName>
</protein>
<keyword id="KW-0002">3D-structure</keyword>
<keyword id="KW-0903">Direct protein sequencing</keyword>
<keyword id="KW-1015">Disulfide bond</keyword>
<keyword id="KW-1017">Isopeptide bond</keyword>
<keyword id="KW-0960">Knottin</keyword>
<keyword id="KW-0611">Plant defense</keyword>
<keyword id="KW-0646">Protease inhibitor</keyword>
<keyword id="KW-0964">Secreted</keyword>
<keyword id="KW-0722">Serine protease inhibitor</keyword>
<organism>
    <name type="scientific">Momordica cochinchinensis</name>
    <name type="common">Spiny bitter cucumber</name>
    <name type="synonym">Muricia cochinchinensis</name>
    <dbReference type="NCBI Taxonomy" id="3674"/>
    <lineage>
        <taxon>Eukaryota</taxon>
        <taxon>Viridiplantae</taxon>
        <taxon>Streptophyta</taxon>
        <taxon>Embryophyta</taxon>
        <taxon>Tracheophyta</taxon>
        <taxon>Spermatophyta</taxon>
        <taxon>Magnoliopsida</taxon>
        <taxon>eudicotyledons</taxon>
        <taxon>Gunneridae</taxon>
        <taxon>Pentapetalae</taxon>
        <taxon>rosids</taxon>
        <taxon>fabids</taxon>
        <taxon>Cucurbitales</taxon>
        <taxon>Cucurbitaceae</taxon>
        <taxon>Momordiceae</taxon>
        <taxon>Momordica</taxon>
    </lineage>
</organism>
<comment type="function">
    <text evidence="10">Inhibits trypsin; probably participates in a plant defense mechanism.</text>
</comment>
<comment type="subcellular location">
    <subcellularLocation>
        <location evidence="9">Secreted</location>
    </subcellularLocation>
</comment>
<comment type="domain">
    <text evidence="1">The presence of a 'disulfide through disulfide knot' structurally defines this protein as a knottin.</text>
</comment>
<comment type="PTM">
    <text evidence="2">A cyclic succinimide probably forms by loss of water between Asp-4 and Gly-5, that can then rehydrate to either the original peptide bond or to a beta-aspartyl isopeptide bond. Three isoforms of MCoTI-II are detected, two with the parent molecular weight, corresponding to the unmodified and proposed isopeptide forms, and one with a molecular weight 18 Da lower, corresponding to a succinimide cross-linked form.</text>
</comment>
<comment type="PTM">
    <text evidence="2">This is a cyclic peptide.</text>
</comment>
<comment type="mass spectrometry" mass="3453.0" error="0.2" method="Electrospray" evidence="2"/>
<comment type="similarity">
    <text evidence="9">Belongs to the protease inhibitor I7 (squash-type serine protease inhibitor) family.</text>
</comment>
<comment type="caution">
    <text evidence="9">The genomic sequence for this protein is not available, so Asp-4 may possibly be an asparagine which is known to be more labile when immediately followed by a glycine.</text>
</comment>
<accession>P82409</accession>
<feature type="peptide" id="PRO_0000044858" description="Trypsin inhibitor 2">
    <location>
        <begin position="1"/>
        <end position="34"/>
    </location>
</feature>
<feature type="site" description="Reactive bond">
    <location>
        <begin position="10"/>
        <end position="11"/>
    </location>
</feature>
<feature type="disulfide bond" evidence="3 4 5 6 7 11 12 13 14 15">
    <location>
        <begin position="8"/>
        <end position="25"/>
    </location>
</feature>
<feature type="disulfide bond" evidence="3 4 5 6 7 11 12 13 14 15">
    <location>
        <begin position="15"/>
        <end position="27"/>
    </location>
</feature>
<feature type="disulfide bond" evidence="3 4 5 6 7 11 12 13 14 15">
    <location>
        <begin position="21"/>
        <end position="33"/>
    </location>
</feature>
<feature type="cross-link" description="Cyclopeptide (Ser-Gly)" evidence="2">
    <location>
        <begin position="1"/>
        <end position="34"/>
    </location>
</feature>
<feature type="cross-link" description="(2-aminosuccinimidyl)acetic acid (Asp-Gly); alternate" evidence="2">
    <location>
        <begin position="4"/>
        <end position="5"/>
    </location>
</feature>
<feature type="cross-link" description="Isoaspartyl glycine isopeptide (Asp-Gly); alternate" evidence="2">
    <location>
        <begin position="4"/>
        <end position="5"/>
    </location>
</feature>
<feature type="strand" evidence="17">
    <location>
        <begin position="11"/>
        <end position="14"/>
    </location>
</feature>
<feature type="helix" evidence="16">
    <location>
        <begin position="18"/>
        <end position="20"/>
    </location>
</feature>
<feature type="strand" evidence="18">
    <location>
        <begin position="25"/>
        <end position="27"/>
    </location>
</feature>
<feature type="strand" evidence="19">
    <location>
        <begin position="31"/>
        <end position="34"/>
    </location>
</feature>
<sequence length="34" mass="3477">SGSDGGVCPKILKKCRRDSDCPGACICRGNGYCG</sequence>
<reference key="1">
    <citation type="journal article" date="2000" name="Biochemistry">
        <title>Squash trypsin inhibitors from Momordica cochinchinensis exhibit an atypical macrocyclic structure.</title>
        <authorList>
            <person name="Hernandez J.-F."/>
            <person name="Gagnon J."/>
            <person name="Chiche L."/>
            <person name="Nguyen T.M."/>
            <person name="Andrieu J.-P."/>
            <person name="Heitz A."/>
            <person name="Trinh T."/>
            <person name="Pham T.T.C."/>
            <person name="Le Nguyen D."/>
        </authorList>
    </citation>
    <scope>PROTEIN SEQUENCE</scope>
    <scope>FUNCTION</scope>
    <scope>SUCCINIMIDE CROSS-LINK AT ASP-4</scope>
    <scope>ISOPEPTIDE BOND AT ASP-4</scope>
    <scope>MASS SPECTROMETRY</scope>
    <source>
        <tissue>Seed</tissue>
    </source>
</reference>
<reference key="2">
    <citation type="journal article" date="2001" name="Biochemistry">
        <title>Solution structure of the squash trypsin inhibitor MCoTI-II. A new family for cyclic knottins.</title>
        <authorList>
            <person name="Heitz A."/>
            <person name="Hernandez J.F."/>
            <person name="Gagnon J."/>
            <person name="Hong T.T."/>
            <person name="Pham T.T."/>
            <person name="Nguyen T.M."/>
            <person name="Le-Nguyen D."/>
            <person name="Chiche L."/>
        </authorList>
    </citation>
    <scope>STRUCTURE BY NMR</scope>
    <scope>DISULFIDE BONDS</scope>
</reference>
<reference key="3">
    <citation type="journal article" date="2001" name="J. Biol. Chem.">
        <title>Circular proteins in plants: solution structure of a novel macrocyclic trypsin inhibitor from Momordica cochinchinensis.</title>
        <authorList>
            <person name="Felizmenio-Quimio M.E."/>
            <person name="Daly N.L."/>
            <person name="Craik D.J."/>
        </authorList>
    </citation>
    <scope>STRUCTURE BY NMR</scope>
    <scope>DISULFIDE BONDS</scope>
</reference>
<reference key="4">
    <citation type="journal article" date="2006" name="J. Mol. Biol.">
        <title>Barnase fusion as a tool to determine the crystal structure of the small disulfide-rich protein McoEeTI.</title>
        <authorList>
            <person name="Niemann H.H."/>
            <person name="Schmoldt H.U."/>
            <person name="Wentzel A."/>
            <person name="Kolmar H."/>
            <person name="Heinz D.W."/>
        </authorList>
    </citation>
    <scope>X-RAY CRYSTALLOGRAPHY (1.30 ANGSTROMS) OF 6-21</scope>
    <scope>DISULFIDE BONDS</scope>
</reference>
<reference key="5">
    <citation type="journal article" date="2013" name="J. Biol. Chem.">
        <title>Structural insights into the role of the cyclic backbone in a squash trypsin inhibitor.</title>
        <authorList>
            <person name="Daly N.L."/>
            <person name="Thorstholm L."/>
            <person name="Greenwood K.P."/>
            <person name="King G.J."/>
            <person name="Rosengren K.J."/>
            <person name="Heras B."/>
            <person name="Martin J.L."/>
            <person name="Craik D.J."/>
        </authorList>
    </citation>
    <scope>X-RAY CRYSTALLOGRAPHY (1.80 ANGSTROMS)</scope>
    <scope>DISULFIDE BONDS</scope>
</reference>
<reference key="6">
    <citation type="journal article" date="2015" name="Sci. Rep.">
        <title>Design of substrate-based BCR-ABL kinase inhibitors using the cyclotide scaffold.</title>
        <authorList>
            <person name="Huang Y.H."/>
            <person name="Henriques S.T."/>
            <person name="Wang C.K."/>
            <person name="Thorstholm L."/>
            <person name="Daly N.L."/>
            <person name="Kaas Q."/>
            <person name="Craik D.J."/>
        </authorList>
    </citation>
    <scope>STRUCTURE BY NMR OF 8-34</scope>
    <scope>DISULFIDE BONDS</scope>
</reference>
<name>ITR2_MOMCO</name>
<dbReference type="PDB" id="1HA9">
    <property type="method" value="NMR"/>
    <property type="chains" value="A=1-34"/>
</dbReference>
<dbReference type="PDB" id="1IB9">
    <property type="method" value="NMR"/>
    <property type="chains" value="A=1-34"/>
</dbReference>
<dbReference type="PDB" id="2C4B">
    <property type="method" value="X-ray"/>
    <property type="resolution" value="1.30 A"/>
    <property type="chains" value="A/B=6-21"/>
</dbReference>
<dbReference type="PDB" id="2IT8">
    <property type="method" value="NMR"/>
    <property type="chains" value="A=6-34"/>
</dbReference>
<dbReference type="PDB" id="2MT8">
    <property type="method" value="NMR"/>
    <property type="chains" value="A=14-34"/>
</dbReference>
<dbReference type="PDB" id="2PO8">
    <property type="method" value="NMR"/>
    <property type="chains" value="A=8-34"/>
</dbReference>
<dbReference type="PDB" id="4GUX">
    <property type="method" value="X-ray"/>
    <property type="resolution" value="1.80 A"/>
    <property type="chains" value="D/E/F=1-34"/>
</dbReference>
<dbReference type="PDBsum" id="1HA9"/>
<dbReference type="PDBsum" id="1IB9"/>
<dbReference type="PDBsum" id="2C4B"/>
<dbReference type="PDBsum" id="2IT8"/>
<dbReference type="PDBsum" id="2MT8"/>
<dbReference type="PDBsum" id="2PO8"/>
<dbReference type="PDBsum" id="4GUX"/>
<dbReference type="BMRB" id="P82409"/>
<dbReference type="SMR" id="P82409"/>
<dbReference type="MEROPS" id="I07.004"/>
<dbReference type="EvolutionaryTrace" id="P82409"/>
<dbReference type="GO" id="GO:0005576">
    <property type="term" value="C:extracellular region"/>
    <property type="evidence" value="ECO:0007669"/>
    <property type="project" value="UniProtKB-SubCell"/>
</dbReference>
<dbReference type="GO" id="GO:0004867">
    <property type="term" value="F:serine-type endopeptidase inhibitor activity"/>
    <property type="evidence" value="ECO:0000315"/>
    <property type="project" value="CAFA"/>
</dbReference>
<dbReference type="GO" id="GO:0006952">
    <property type="term" value="P:defense response"/>
    <property type="evidence" value="ECO:0007669"/>
    <property type="project" value="UniProtKB-KW"/>
</dbReference>
<dbReference type="GO" id="GO:1900004">
    <property type="term" value="P:negative regulation of serine-type endopeptidase activity"/>
    <property type="evidence" value="ECO:0000315"/>
    <property type="project" value="CAFA"/>
</dbReference>
<dbReference type="CDD" id="cd00150">
    <property type="entry name" value="PlantTI"/>
    <property type="match status" value="1"/>
</dbReference>
<dbReference type="FunFam" id="4.10.75.20:FF:000001">
    <property type="match status" value="1"/>
</dbReference>
<dbReference type="Gene3D" id="4.10.75.20">
    <property type="match status" value="1"/>
</dbReference>
<dbReference type="InterPro" id="IPR000737">
    <property type="entry name" value="Prot_inh_squash"/>
</dbReference>
<dbReference type="InterPro" id="IPR011052">
    <property type="entry name" value="Proteinase_amylase_inhib_sf"/>
</dbReference>
<dbReference type="Pfam" id="PF00299">
    <property type="entry name" value="Squash"/>
    <property type="match status" value="1"/>
</dbReference>
<dbReference type="SMART" id="SM00286">
    <property type="entry name" value="PTI"/>
    <property type="match status" value="1"/>
</dbReference>
<dbReference type="SUPFAM" id="SSF57027">
    <property type="entry name" value="Plant inhibitors of proteinases and amylases"/>
    <property type="match status" value="1"/>
</dbReference>
<dbReference type="PROSITE" id="PS00286">
    <property type="entry name" value="SQUASH_INHIBITOR"/>
    <property type="match status" value="1"/>
</dbReference>